<proteinExistence type="inferred from homology"/>
<name>LGT_CHLT3</name>
<evidence type="ECO:0000255" key="1">
    <source>
        <dbReference type="HAMAP-Rule" id="MF_01147"/>
    </source>
</evidence>
<comment type="function">
    <text evidence="1">Catalyzes the transfer of the diacylglyceryl group from phosphatidylglycerol to the sulfhydryl group of the N-terminal cysteine of a prolipoprotein, the first step in the formation of mature lipoproteins.</text>
</comment>
<comment type="catalytic activity">
    <reaction evidence="1">
        <text>L-cysteinyl-[prolipoprotein] + a 1,2-diacyl-sn-glycero-3-phospho-(1'-sn-glycerol) = an S-1,2-diacyl-sn-glyceryl-L-cysteinyl-[prolipoprotein] + sn-glycerol 1-phosphate + H(+)</text>
        <dbReference type="Rhea" id="RHEA:56712"/>
        <dbReference type="Rhea" id="RHEA-COMP:14679"/>
        <dbReference type="Rhea" id="RHEA-COMP:14680"/>
        <dbReference type="ChEBI" id="CHEBI:15378"/>
        <dbReference type="ChEBI" id="CHEBI:29950"/>
        <dbReference type="ChEBI" id="CHEBI:57685"/>
        <dbReference type="ChEBI" id="CHEBI:64716"/>
        <dbReference type="ChEBI" id="CHEBI:140658"/>
        <dbReference type="EC" id="2.5.1.145"/>
    </reaction>
</comment>
<comment type="pathway">
    <text evidence="1">Protein modification; lipoprotein biosynthesis (diacylglyceryl transfer).</text>
</comment>
<comment type="subcellular location">
    <subcellularLocation>
        <location evidence="1">Cell inner membrane</location>
        <topology evidence="1">Multi-pass membrane protein</topology>
    </subcellularLocation>
</comment>
<comment type="similarity">
    <text evidence="1">Belongs to the Lgt family.</text>
</comment>
<dbReference type="EC" id="2.5.1.145" evidence="1"/>
<dbReference type="EMBL" id="CP001100">
    <property type="protein sequence ID" value="ACF13697.1"/>
    <property type="molecule type" value="Genomic_DNA"/>
</dbReference>
<dbReference type="RefSeq" id="WP_012499781.1">
    <property type="nucleotide sequence ID" value="NC_011026.1"/>
</dbReference>
<dbReference type="SMR" id="B3QZ04"/>
<dbReference type="STRING" id="517418.Ctha_1234"/>
<dbReference type="KEGG" id="cts:Ctha_1234"/>
<dbReference type="eggNOG" id="COG0682">
    <property type="taxonomic scope" value="Bacteria"/>
</dbReference>
<dbReference type="HOGENOM" id="CLU_013386_1_0_10"/>
<dbReference type="OrthoDB" id="871140at2"/>
<dbReference type="UniPathway" id="UPA00664"/>
<dbReference type="Proteomes" id="UP000001208">
    <property type="component" value="Chromosome"/>
</dbReference>
<dbReference type="GO" id="GO:0005886">
    <property type="term" value="C:plasma membrane"/>
    <property type="evidence" value="ECO:0007669"/>
    <property type="project" value="UniProtKB-SubCell"/>
</dbReference>
<dbReference type="GO" id="GO:0008961">
    <property type="term" value="F:phosphatidylglycerol-prolipoprotein diacylglyceryl transferase activity"/>
    <property type="evidence" value="ECO:0007669"/>
    <property type="project" value="UniProtKB-UniRule"/>
</dbReference>
<dbReference type="GO" id="GO:0042158">
    <property type="term" value="P:lipoprotein biosynthetic process"/>
    <property type="evidence" value="ECO:0007669"/>
    <property type="project" value="UniProtKB-UniRule"/>
</dbReference>
<dbReference type="HAMAP" id="MF_01147">
    <property type="entry name" value="Lgt"/>
    <property type="match status" value="1"/>
</dbReference>
<dbReference type="InterPro" id="IPR001640">
    <property type="entry name" value="Lgt"/>
</dbReference>
<dbReference type="NCBIfam" id="TIGR00544">
    <property type="entry name" value="lgt"/>
    <property type="match status" value="1"/>
</dbReference>
<dbReference type="PANTHER" id="PTHR30589:SF0">
    <property type="entry name" value="PHOSPHATIDYLGLYCEROL--PROLIPOPROTEIN DIACYLGLYCERYL TRANSFERASE"/>
    <property type="match status" value="1"/>
</dbReference>
<dbReference type="PANTHER" id="PTHR30589">
    <property type="entry name" value="PROLIPOPROTEIN DIACYLGLYCERYL TRANSFERASE"/>
    <property type="match status" value="1"/>
</dbReference>
<dbReference type="Pfam" id="PF01790">
    <property type="entry name" value="LGT"/>
    <property type="match status" value="1"/>
</dbReference>
<organism>
    <name type="scientific">Chloroherpeton thalassium (strain ATCC 35110 / GB-78)</name>
    <dbReference type="NCBI Taxonomy" id="517418"/>
    <lineage>
        <taxon>Bacteria</taxon>
        <taxon>Pseudomonadati</taxon>
        <taxon>Chlorobiota</taxon>
        <taxon>Chlorobiia</taxon>
        <taxon>Chlorobiales</taxon>
        <taxon>Chloroherpetonaceae</taxon>
        <taxon>Chloroherpeton</taxon>
    </lineage>
</organism>
<sequence>MDTSSYIFWDMSPDMFSLGPITIRWYGVFFALSFLCGLYLMTKVFEHEKKPEDDINYLFYYMIAGTVIGARLGHCFFYEPDYYLAHPAEIIKVWHGGLASHGGVLGILTAVYFYSRSRPEQSLAWVLDRITLPAMLGAGLIRLGNLFNSEIIGIPTDVSWAFIFARVDLLPRHPVQLYESIVYFLIFGFLMLAYWKWDWGKQRGLLLGTILTSVFSARFLLEFFKTRQADYGHDLPLSVGQWLSIPAVIIGVLLIFQSVKQAQLEKTS</sequence>
<keyword id="KW-0997">Cell inner membrane</keyword>
<keyword id="KW-1003">Cell membrane</keyword>
<keyword id="KW-0472">Membrane</keyword>
<keyword id="KW-1185">Reference proteome</keyword>
<keyword id="KW-0808">Transferase</keyword>
<keyword id="KW-0812">Transmembrane</keyword>
<keyword id="KW-1133">Transmembrane helix</keyword>
<reference key="1">
    <citation type="submission" date="2008-06" db="EMBL/GenBank/DDBJ databases">
        <title>Complete sequence of Chloroherpeton thalassium ATCC 35110.</title>
        <authorList>
            <consortium name="US DOE Joint Genome Institute"/>
            <person name="Lucas S."/>
            <person name="Copeland A."/>
            <person name="Lapidus A."/>
            <person name="Glavina del Rio T."/>
            <person name="Dalin E."/>
            <person name="Tice H."/>
            <person name="Bruce D."/>
            <person name="Goodwin L."/>
            <person name="Pitluck S."/>
            <person name="Schmutz J."/>
            <person name="Larimer F."/>
            <person name="Land M."/>
            <person name="Hauser L."/>
            <person name="Kyrpides N."/>
            <person name="Mikhailova N."/>
            <person name="Liu Z."/>
            <person name="Li T."/>
            <person name="Zhao F."/>
            <person name="Overmann J."/>
            <person name="Bryant D.A."/>
            <person name="Richardson P."/>
        </authorList>
    </citation>
    <scope>NUCLEOTIDE SEQUENCE [LARGE SCALE GENOMIC DNA]</scope>
    <source>
        <strain>ATCC 35110 / GB-78</strain>
    </source>
</reference>
<gene>
    <name evidence="1" type="primary">lgt</name>
    <name type="ordered locus">Ctha_1234</name>
</gene>
<protein>
    <recommendedName>
        <fullName evidence="1">Phosphatidylglycerol--prolipoprotein diacylglyceryl transferase</fullName>
        <ecNumber evidence="1">2.5.1.145</ecNumber>
    </recommendedName>
</protein>
<accession>B3QZ04</accession>
<feature type="chain" id="PRO_1000137413" description="Phosphatidylglycerol--prolipoprotein diacylglyceryl transferase">
    <location>
        <begin position="1"/>
        <end position="268"/>
    </location>
</feature>
<feature type="transmembrane region" description="Helical" evidence="1">
    <location>
        <begin position="25"/>
        <end position="45"/>
    </location>
</feature>
<feature type="transmembrane region" description="Helical" evidence="1">
    <location>
        <begin position="57"/>
        <end position="77"/>
    </location>
</feature>
<feature type="transmembrane region" description="Helical" evidence="1">
    <location>
        <begin position="93"/>
        <end position="113"/>
    </location>
</feature>
<feature type="transmembrane region" description="Helical" evidence="1">
    <location>
        <begin position="151"/>
        <end position="171"/>
    </location>
</feature>
<feature type="transmembrane region" description="Helical" evidence="1">
    <location>
        <begin position="175"/>
        <end position="195"/>
    </location>
</feature>
<feature type="transmembrane region" description="Helical" evidence="1">
    <location>
        <begin position="204"/>
        <end position="224"/>
    </location>
</feature>
<feature type="transmembrane region" description="Helical" evidence="1">
    <location>
        <begin position="236"/>
        <end position="256"/>
    </location>
</feature>
<feature type="binding site" evidence="1">
    <location>
        <position position="142"/>
    </location>
    <ligand>
        <name>a 1,2-diacyl-sn-glycero-3-phospho-(1'-sn-glycerol)</name>
        <dbReference type="ChEBI" id="CHEBI:64716"/>
    </ligand>
</feature>